<keyword id="KW-0509">mRNA transport</keyword>
<keyword id="KW-0906">Nuclear pore complex</keyword>
<keyword id="KW-0539">Nucleus</keyword>
<keyword id="KW-0653">Protein transport</keyword>
<keyword id="KW-1185">Reference proteome</keyword>
<keyword id="KW-0811">Translocation</keyword>
<keyword id="KW-0813">Transport</keyword>
<dbReference type="EMBL" id="AC007357">
    <property type="protein sequence ID" value="AAD31065.1"/>
    <property type="status" value="ALT_SEQ"/>
    <property type="molecule type" value="Genomic_DNA"/>
</dbReference>
<dbReference type="EMBL" id="CP002684">
    <property type="protein sequence ID" value="AEE28972.1"/>
    <property type="molecule type" value="Genomic_DNA"/>
</dbReference>
<dbReference type="EMBL" id="AK228913">
    <property type="protein sequence ID" value="BAF00802.1"/>
    <property type="molecule type" value="mRNA"/>
</dbReference>
<dbReference type="PIR" id="D86265">
    <property type="entry name" value="D86265"/>
</dbReference>
<dbReference type="RefSeq" id="NP_172771.1">
    <property type="nucleotide sequence ID" value="NM_101182.4"/>
</dbReference>
<dbReference type="SMR" id="Q0WPZ7"/>
<dbReference type="BioGRID" id="23109">
    <property type="interactions" value="3"/>
</dbReference>
<dbReference type="FunCoup" id="Q0WPZ7">
    <property type="interactions" value="1695"/>
</dbReference>
<dbReference type="STRING" id="3702.Q0WPZ7"/>
<dbReference type="PaxDb" id="3702-AT1G13120.1"/>
<dbReference type="ProteomicsDB" id="228797"/>
<dbReference type="EnsemblPlants" id="AT1G13120.1">
    <property type="protein sequence ID" value="AT1G13120.1"/>
    <property type="gene ID" value="AT1G13120"/>
</dbReference>
<dbReference type="GeneID" id="837869"/>
<dbReference type="Gramene" id="AT1G13120.1">
    <property type="protein sequence ID" value="AT1G13120.1"/>
    <property type="gene ID" value="AT1G13120"/>
</dbReference>
<dbReference type="KEGG" id="ath:AT1G13120"/>
<dbReference type="Araport" id="AT1G13120"/>
<dbReference type="TAIR" id="AT1G13120">
    <property type="gene designation" value="GLE1"/>
</dbReference>
<dbReference type="eggNOG" id="KOG2412">
    <property type="taxonomic scope" value="Eukaryota"/>
</dbReference>
<dbReference type="HOGENOM" id="CLU_020707_0_0_1"/>
<dbReference type="InParanoid" id="Q0WPZ7"/>
<dbReference type="OMA" id="VPANIHS"/>
<dbReference type="PhylomeDB" id="Q0WPZ7"/>
<dbReference type="PRO" id="PR:Q0WPZ7"/>
<dbReference type="Proteomes" id="UP000006548">
    <property type="component" value="Chromosome 1"/>
</dbReference>
<dbReference type="ExpressionAtlas" id="Q0WPZ7">
    <property type="expression patterns" value="baseline and differential"/>
</dbReference>
<dbReference type="GO" id="GO:0005635">
    <property type="term" value="C:nuclear envelope"/>
    <property type="evidence" value="ECO:0000314"/>
    <property type="project" value="TAIR"/>
</dbReference>
<dbReference type="GO" id="GO:0005643">
    <property type="term" value="C:nuclear pore"/>
    <property type="evidence" value="ECO:0007669"/>
    <property type="project" value="UniProtKB-SubCell"/>
</dbReference>
<dbReference type="GO" id="GO:0016973">
    <property type="term" value="P:poly(A)+ mRNA export from nucleus"/>
    <property type="evidence" value="ECO:0007669"/>
    <property type="project" value="InterPro"/>
</dbReference>
<dbReference type="GO" id="GO:0015031">
    <property type="term" value="P:protein transport"/>
    <property type="evidence" value="ECO:0007669"/>
    <property type="project" value="UniProtKB-KW"/>
</dbReference>
<dbReference type="GO" id="GO:0048316">
    <property type="term" value="P:seed development"/>
    <property type="evidence" value="ECO:0000315"/>
    <property type="project" value="TAIR"/>
</dbReference>
<dbReference type="Gene3D" id="1.25.40.510">
    <property type="entry name" value="GLE1-like"/>
    <property type="match status" value="1"/>
</dbReference>
<dbReference type="InterPro" id="IPR012476">
    <property type="entry name" value="GLE1"/>
</dbReference>
<dbReference type="InterPro" id="IPR038506">
    <property type="entry name" value="GLE1-like_sf"/>
</dbReference>
<dbReference type="PANTHER" id="PTHR12960">
    <property type="entry name" value="GLE-1-RELATED"/>
    <property type="match status" value="1"/>
</dbReference>
<dbReference type="PANTHER" id="PTHR12960:SF0">
    <property type="entry name" value="MRNA EXPORT FACTOR GLE1"/>
    <property type="match status" value="1"/>
</dbReference>
<dbReference type="Pfam" id="PF07817">
    <property type="entry name" value="GLE1"/>
    <property type="match status" value="1"/>
</dbReference>
<reference key="1">
    <citation type="journal article" date="2000" name="Nature">
        <title>Sequence and analysis of chromosome 1 of the plant Arabidopsis thaliana.</title>
        <authorList>
            <person name="Theologis A."/>
            <person name="Ecker J.R."/>
            <person name="Palm C.J."/>
            <person name="Federspiel N.A."/>
            <person name="Kaul S."/>
            <person name="White O."/>
            <person name="Alonso J."/>
            <person name="Altafi H."/>
            <person name="Araujo R."/>
            <person name="Bowman C.L."/>
            <person name="Brooks S.Y."/>
            <person name="Buehler E."/>
            <person name="Chan A."/>
            <person name="Chao Q."/>
            <person name="Chen H."/>
            <person name="Cheuk R.F."/>
            <person name="Chin C.W."/>
            <person name="Chung M.K."/>
            <person name="Conn L."/>
            <person name="Conway A.B."/>
            <person name="Conway A.R."/>
            <person name="Creasy T.H."/>
            <person name="Dewar K."/>
            <person name="Dunn P."/>
            <person name="Etgu P."/>
            <person name="Feldblyum T.V."/>
            <person name="Feng J.-D."/>
            <person name="Fong B."/>
            <person name="Fujii C.Y."/>
            <person name="Gill J.E."/>
            <person name="Goldsmith A.D."/>
            <person name="Haas B."/>
            <person name="Hansen N.F."/>
            <person name="Hughes B."/>
            <person name="Huizar L."/>
            <person name="Hunter J.L."/>
            <person name="Jenkins J."/>
            <person name="Johnson-Hopson C."/>
            <person name="Khan S."/>
            <person name="Khaykin E."/>
            <person name="Kim C.J."/>
            <person name="Koo H.L."/>
            <person name="Kremenetskaia I."/>
            <person name="Kurtz D.B."/>
            <person name="Kwan A."/>
            <person name="Lam B."/>
            <person name="Langin-Hooper S."/>
            <person name="Lee A."/>
            <person name="Lee J.M."/>
            <person name="Lenz C.A."/>
            <person name="Li J.H."/>
            <person name="Li Y.-P."/>
            <person name="Lin X."/>
            <person name="Liu S.X."/>
            <person name="Liu Z.A."/>
            <person name="Luros J.S."/>
            <person name="Maiti R."/>
            <person name="Marziali A."/>
            <person name="Militscher J."/>
            <person name="Miranda M."/>
            <person name="Nguyen M."/>
            <person name="Nierman W.C."/>
            <person name="Osborne B.I."/>
            <person name="Pai G."/>
            <person name="Peterson J."/>
            <person name="Pham P.K."/>
            <person name="Rizzo M."/>
            <person name="Rooney T."/>
            <person name="Rowley D."/>
            <person name="Sakano H."/>
            <person name="Salzberg S.L."/>
            <person name="Schwartz J.R."/>
            <person name="Shinn P."/>
            <person name="Southwick A.M."/>
            <person name="Sun H."/>
            <person name="Tallon L.J."/>
            <person name="Tambunga G."/>
            <person name="Toriumi M.J."/>
            <person name="Town C.D."/>
            <person name="Utterback T."/>
            <person name="Van Aken S."/>
            <person name="Vaysberg M."/>
            <person name="Vysotskaia V.S."/>
            <person name="Walker M."/>
            <person name="Wu D."/>
            <person name="Yu G."/>
            <person name="Fraser C.M."/>
            <person name="Venter J.C."/>
            <person name="Davis R.W."/>
        </authorList>
    </citation>
    <scope>NUCLEOTIDE SEQUENCE [LARGE SCALE GENOMIC DNA]</scope>
    <source>
        <strain>cv. Columbia</strain>
    </source>
</reference>
<reference key="2">
    <citation type="journal article" date="2017" name="Plant J.">
        <title>Araport11: a complete reannotation of the Arabidopsis thaliana reference genome.</title>
        <authorList>
            <person name="Cheng C.Y."/>
            <person name="Krishnakumar V."/>
            <person name="Chan A.P."/>
            <person name="Thibaud-Nissen F."/>
            <person name="Schobel S."/>
            <person name="Town C.D."/>
        </authorList>
    </citation>
    <scope>GENOME REANNOTATION</scope>
    <source>
        <strain>cv. Columbia</strain>
    </source>
</reference>
<reference key="3">
    <citation type="submission" date="2006-07" db="EMBL/GenBank/DDBJ databases">
        <title>Large-scale analysis of RIKEN Arabidopsis full-length (RAFL) cDNAs.</title>
        <authorList>
            <person name="Totoki Y."/>
            <person name="Seki M."/>
            <person name="Ishida J."/>
            <person name="Nakajima M."/>
            <person name="Enju A."/>
            <person name="Kamiya A."/>
            <person name="Narusaka M."/>
            <person name="Shin-i T."/>
            <person name="Nakagawa M."/>
            <person name="Sakamoto N."/>
            <person name="Oishi K."/>
            <person name="Kohara Y."/>
            <person name="Kobayashi M."/>
            <person name="Toyoda A."/>
            <person name="Sakaki Y."/>
            <person name="Sakurai T."/>
            <person name="Iida K."/>
            <person name="Akiyama K."/>
            <person name="Satou M."/>
            <person name="Toyoda T."/>
            <person name="Konagaya A."/>
            <person name="Carninci P."/>
            <person name="Kawai J."/>
            <person name="Hayashizaki Y."/>
            <person name="Shinozaki K."/>
        </authorList>
    </citation>
    <scope>NUCLEOTIDE SEQUENCE [LARGE SCALE MRNA]</scope>
    <source>
        <strain>cv. Columbia</strain>
    </source>
</reference>
<reference key="4">
    <citation type="journal article" date="2010" name="Plant Cell">
        <title>Identification and characterization of nuclear pore complex components in Arabidopsis thaliana.</title>
        <authorList>
            <person name="Tamura K."/>
            <person name="Fukao Y."/>
            <person name="Iwamoto M."/>
            <person name="Haraguchi T."/>
            <person name="Hara-Nishimura I."/>
        </authorList>
    </citation>
    <scope>IDENTIFICATION IN THE NUCLEAR PORE COMPLEX BY MASS SPECTROMETRY</scope>
    <scope>SUBCELLULAR LOCATION</scope>
    <scope>NOMENCLATURE</scope>
</reference>
<reference key="5">
    <citation type="journal article" date="2012" name="Plant Physiol.">
        <title>LONO1 encoding a nucleoporin is required for embryogenesis and seed viability in Arabidopsis.</title>
        <authorList>
            <person name="Braud C."/>
            <person name="Zheng W."/>
            <person name="Xiao W."/>
        </authorList>
    </citation>
    <scope>FUNCTION</scope>
    <scope>DISRUPTION PHENOTYPE</scope>
</reference>
<accession>Q0WPZ7</accession>
<accession>Q9SAE5</accession>
<organism evidence="10">
    <name type="scientific">Arabidopsis thaliana</name>
    <name type="common">Mouse-ear cress</name>
    <dbReference type="NCBI Taxonomy" id="3702"/>
    <lineage>
        <taxon>Eukaryota</taxon>
        <taxon>Viridiplantae</taxon>
        <taxon>Streptophyta</taxon>
        <taxon>Embryophyta</taxon>
        <taxon>Tracheophyta</taxon>
        <taxon>Spermatophyta</taxon>
        <taxon>Magnoliopsida</taxon>
        <taxon>eudicotyledons</taxon>
        <taxon>Gunneridae</taxon>
        <taxon>Pentapetalae</taxon>
        <taxon>rosids</taxon>
        <taxon>malvids</taxon>
        <taxon>Brassicales</taxon>
        <taxon>Brassicaceae</taxon>
        <taxon>Camelineae</taxon>
        <taxon>Arabidopsis</taxon>
    </lineage>
</organism>
<comment type="function">
    <text evidence="3">Required for seed viability.</text>
</comment>
<comment type="subunit">
    <text evidence="6">Part of the nuclear pore complex (NPC). The NPC has an eight-fold symmetrical structure comprising a central transport channel and two rings, the cytoplasmic and nuclear rings, to which eight filaments are attached. The cytoplasmic filaments have loose ends, while the nuclear filaments are joined in a distal ring, forming a nuclear basket. NPCs are highly dynamic in configuration and composition, and can be devided in 3 subcomplexes, the NUP62 subcomplex, the NUP107-160 subcomplex and the NUP93 subcomplex, containing approximately 30 different nucleoporin proteins.</text>
</comment>
<comment type="subcellular location">
    <subcellularLocation>
        <location evidence="2">Nucleus envelope</location>
    </subcellularLocation>
    <subcellularLocation>
        <location evidence="6">Nucleus</location>
        <location evidence="6">Nuclear pore complex</location>
    </subcellularLocation>
</comment>
<comment type="disruption phenotype">
    <text evidence="3">Lethal when homozygous.</text>
</comment>
<comment type="similarity">
    <text evidence="5">Belongs to the GLE1 family.</text>
</comment>
<comment type="sequence caution" evidence="5">
    <conflict type="erroneous gene model prediction">
        <sequence resource="EMBL-CDS" id="AAD31065"/>
    </conflict>
</comment>
<evidence type="ECO:0000256" key="1">
    <source>
        <dbReference type="SAM" id="MobiDB-lite"/>
    </source>
</evidence>
<evidence type="ECO:0000269" key="2">
    <source>
    </source>
</evidence>
<evidence type="ECO:0000269" key="3">
    <source>
    </source>
</evidence>
<evidence type="ECO:0000303" key="4">
    <source>
    </source>
</evidence>
<evidence type="ECO:0000305" key="5"/>
<evidence type="ECO:0000305" key="6">
    <source>
    </source>
</evidence>
<evidence type="ECO:0000312" key="7">
    <source>
        <dbReference type="Araport" id="AT1G13120"/>
    </source>
</evidence>
<evidence type="ECO:0000312" key="8">
    <source>
        <dbReference type="EMBL" id="AAD31065.1"/>
    </source>
</evidence>
<evidence type="ECO:0000312" key="9">
    <source>
        <dbReference type="EMBL" id="AEE28972.1"/>
    </source>
</evidence>
<evidence type="ECO:0000312" key="10">
    <source>
        <dbReference type="EMBL" id="BAF00802.1"/>
    </source>
</evidence>
<protein>
    <recommendedName>
        <fullName evidence="5">mRNA export factor GLE1</fullName>
    </recommendedName>
    <alternativeName>
        <fullName evidence="5">GLE1-like protein</fullName>
    </alternativeName>
    <alternativeName>
        <fullName evidence="5">Nucleoporin GLE1</fullName>
    </alternativeName>
    <alternativeName>
        <fullName>Protein EMBRYO DEFECTIVE 1745</fullName>
    </alternativeName>
    <alternativeName>
        <fullName evidence="4">Protein GLE1</fullName>
        <shortName>AtGLE1</shortName>
    </alternativeName>
</protein>
<name>GLE1_ARATH</name>
<proteinExistence type="evidence at protein level"/>
<gene>
    <name evidence="4" type="primary">GLE1</name>
    <name evidence="9" type="synonym">EMB1745</name>
    <name evidence="7" type="ordered locus">At1g13120</name>
    <name evidence="8" type="ORF">F3F19.14</name>
</gene>
<sequence length="611" mass="69640">MGIVLEPPCPKSVDGISIDPEPNWNFESLVAEIASVEKKLNGFSMYPQPITNTTLRMGRRGGGFVMHVSEDEMESDEGEESDDEEEEEDHSQICTAGKRFACDELYLSDESDEEFDHEPEYMMNKLGLAESALYEVINDHQTEIKDDIRNQVSVVETEIMNEIETSLSAIARVEKYSETRKEVERKLDLQYQRKVAEALDTHLTAVQREHKIKSQIEERKIRSEEAQEEARRKERAHQEEKIRQEKARAEAQMLAKIRAEEEKKEVERKAAREVAEKEVADRKAAEQKLAEQKAVIESVTGSSATSNAQAGGNSIRAAESALILENHRLKKLEELETTNQSLKSRSNENFSSFEKHIGRVIRQISGTKDSVSGKINDIVKIFKDPRCPVSISIAAFAKKMVTTKEKPNPFACSYVIVYINSQFPQVMDILLAEFHKACIYTVPKHIVNSQSAWDSDAYERLDSIMRLYGALVQTDIRVGNATNVHGIEHGWAWLARFLNKIPANRATATALNSFLQTAGFGLHQRYKSQFLKVVNVVREHFLQKLRAKKDTSDLLVIIAEITAYLDDRMYLKEPEGRAMKTTSTLSSELTAELNQPNYNQNYQRNDYRNYY</sequence>
<feature type="chain" id="PRO_0000431074" description="mRNA export factor GLE1">
    <location>
        <begin position="1"/>
        <end position="611"/>
    </location>
</feature>
<feature type="region of interest" description="Disordered" evidence="1">
    <location>
        <begin position="69"/>
        <end position="94"/>
    </location>
</feature>
<feature type="region of interest" description="Disordered" evidence="1">
    <location>
        <begin position="220"/>
        <end position="243"/>
    </location>
</feature>
<feature type="compositionally biased region" description="Acidic residues" evidence="1">
    <location>
        <begin position="71"/>
        <end position="89"/>
    </location>
</feature>